<name>UVRC_HALWD</name>
<sequence length="585" mass="64789">MKQRELRERAAELPAEPGVYQFLEDNTVRYVGKALELRDRVRSYADPRSERIRQMVARADDIDIALTETETQALLLEANLIKRHQPRYNVRLKDDKSYPLVQFTNHSVPRIEVTRDPDSDATVFGPYTEVKRLETAVKALREVYGLRGCSDHKYNNRNRPCLEYEVGLCSAPCTGEIDATAYRSAVESAVQFFEGKTGILADPLRQEMQAAATAEEFERAANIRDRLAVIESFHGGGEAAVSSEDNSHTAETTSERAVDVLGVAIEGTTATVARLHSDNGQLVDRSQHRLNAPTGEDRASAVLTAFLTQYYAERSLPDAILCSEHPHDNDVREWLSVEGVNIRVPGTGRESKLIDLALKNARNGSVHDNESAALADALGFSIINRIEGFDVSHSQGRAVVGSNVCFIDGSAATDAYRRKRLTDTNDDYARMQELLTWRAKRACDGRDERPDPDLIVIDGGKGQLRAAREAVETTGWDVSTIALAKADELVVTPNGVHDWDADAPQLHLLQRVRDEAHRFAVQYHQSIRDDIHTVLSDVPGVGEQTQQALLRRFGSVENVRSASRDALCDVPGVGKQTADTIANRL</sequence>
<gene>
    <name evidence="1" type="primary">uvrC</name>
    <name type="ordered locus">HQ_3694A</name>
</gene>
<dbReference type="EMBL" id="AM180088">
    <property type="protein sequence ID" value="CAJ53781.1"/>
    <property type="molecule type" value="Genomic_DNA"/>
</dbReference>
<dbReference type="RefSeq" id="WP_011572863.1">
    <property type="nucleotide sequence ID" value="NC_008212.1"/>
</dbReference>
<dbReference type="SMR" id="Q18E52"/>
<dbReference type="STRING" id="362976.HQ_3694A"/>
<dbReference type="GeneID" id="4194927"/>
<dbReference type="KEGG" id="hwa:HQ_3694A"/>
<dbReference type="eggNOG" id="arCOG04753">
    <property type="taxonomic scope" value="Archaea"/>
</dbReference>
<dbReference type="HOGENOM" id="CLU_014841_3_1_2"/>
<dbReference type="Proteomes" id="UP000001975">
    <property type="component" value="Chromosome"/>
</dbReference>
<dbReference type="GO" id="GO:0005737">
    <property type="term" value="C:cytoplasm"/>
    <property type="evidence" value="ECO:0007669"/>
    <property type="project" value="UniProtKB-SubCell"/>
</dbReference>
<dbReference type="GO" id="GO:0009380">
    <property type="term" value="C:excinuclease repair complex"/>
    <property type="evidence" value="ECO:0007669"/>
    <property type="project" value="InterPro"/>
</dbReference>
<dbReference type="GO" id="GO:0003677">
    <property type="term" value="F:DNA binding"/>
    <property type="evidence" value="ECO:0007669"/>
    <property type="project" value="UniProtKB-UniRule"/>
</dbReference>
<dbReference type="GO" id="GO:0009381">
    <property type="term" value="F:excinuclease ABC activity"/>
    <property type="evidence" value="ECO:0007669"/>
    <property type="project" value="UniProtKB-UniRule"/>
</dbReference>
<dbReference type="GO" id="GO:0006289">
    <property type="term" value="P:nucleotide-excision repair"/>
    <property type="evidence" value="ECO:0007669"/>
    <property type="project" value="UniProtKB-UniRule"/>
</dbReference>
<dbReference type="GO" id="GO:0009432">
    <property type="term" value="P:SOS response"/>
    <property type="evidence" value="ECO:0007669"/>
    <property type="project" value="UniProtKB-UniRule"/>
</dbReference>
<dbReference type="CDD" id="cd10434">
    <property type="entry name" value="GIY-YIG_UvrC_Cho"/>
    <property type="match status" value="1"/>
</dbReference>
<dbReference type="FunFam" id="3.40.1440.10:FF:000001">
    <property type="entry name" value="UvrABC system protein C"/>
    <property type="match status" value="1"/>
</dbReference>
<dbReference type="Gene3D" id="1.10.150.20">
    <property type="entry name" value="5' to 3' exonuclease, C-terminal subdomain"/>
    <property type="match status" value="1"/>
</dbReference>
<dbReference type="Gene3D" id="3.40.1440.10">
    <property type="entry name" value="GIY-YIG endonuclease"/>
    <property type="match status" value="1"/>
</dbReference>
<dbReference type="Gene3D" id="4.10.860.10">
    <property type="entry name" value="UVR domain"/>
    <property type="match status" value="1"/>
</dbReference>
<dbReference type="Gene3D" id="3.30.420.340">
    <property type="entry name" value="UvrC, RNAse H endonuclease domain"/>
    <property type="match status" value="1"/>
</dbReference>
<dbReference type="HAMAP" id="MF_00203">
    <property type="entry name" value="UvrC"/>
    <property type="match status" value="1"/>
</dbReference>
<dbReference type="InterPro" id="IPR000305">
    <property type="entry name" value="GIY-YIG_endonuc"/>
</dbReference>
<dbReference type="InterPro" id="IPR035901">
    <property type="entry name" value="GIY-YIG_endonuc_sf"/>
</dbReference>
<dbReference type="InterPro" id="IPR047296">
    <property type="entry name" value="GIY-YIG_UvrC_Cho"/>
</dbReference>
<dbReference type="InterPro" id="IPR003583">
    <property type="entry name" value="Hlx-hairpin-Hlx_DNA-bd_motif"/>
</dbReference>
<dbReference type="InterPro" id="IPR010994">
    <property type="entry name" value="RuvA_2-like"/>
</dbReference>
<dbReference type="InterPro" id="IPR001943">
    <property type="entry name" value="UVR_dom"/>
</dbReference>
<dbReference type="InterPro" id="IPR036876">
    <property type="entry name" value="UVR_dom_sf"/>
</dbReference>
<dbReference type="InterPro" id="IPR050066">
    <property type="entry name" value="UvrABC_protein_C"/>
</dbReference>
<dbReference type="InterPro" id="IPR004791">
    <property type="entry name" value="UvrC"/>
</dbReference>
<dbReference type="InterPro" id="IPR001162">
    <property type="entry name" value="UvrC_RNase_H_dom"/>
</dbReference>
<dbReference type="InterPro" id="IPR038476">
    <property type="entry name" value="UvrC_RNase_H_dom_sf"/>
</dbReference>
<dbReference type="NCBIfam" id="NF011262">
    <property type="entry name" value="PRK14668.1"/>
    <property type="match status" value="1"/>
</dbReference>
<dbReference type="NCBIfam" id="TIGR00194">
    <property type="entry name" value="uvrC"/>
    <property type="match status" value="1"/>
</dbReference>
<dbReference type="PANTHER" id="PTHR30562:SF1">
    <property type="entry name" value="UVRABC SYSTEM PROTEIN C"/>
    <property type="match status" value="1"/>
</dbReference>
<dbReference type="PANTHER" id="PTHR30562">
    <property type="entry name" value="UVRC/OXIDOREDUCTASE"/>
    <property type="match status" value="1"/>
</dbReference>
<dbReference type="Pfam" id="PF14520">
    <property type="entry name" value="HHH_5"/>
    <property type="match status" value="1"/>
</dbReference>
<dbReference type="Pfam" id="PF02151">
    <property type="entry name" value="UVR"/>
    <property type="match status" value="1"/>
</dbReference>
<dbReference type="Pfam" id="PF22920">
    <property type="entry name" value="UvrC_RNaseH"/>
    <property type="match status" value="1"/>
</dbReference>
<dbReference type="Pfam" id="PF08459">
    <property type="entry name" value="UvrC_RNaseH_dom"/>
    <property type="match status" value="1"/>
</dbReference>
<dbReference type="SMART" id="SM00465">
    <property type="entry name" value="GIYc"/>
    <property type="match status" value="1"/>
</dbReference>
<dbReference type="SMART" id="SM00278">
    <property type="entry name" value="HhH1"/>
    <property type="match status" value="2"/>
</dbReference>
<dbReference type="SUPFAM" id="SSF46600">
    <property type="entry name" value="C-terminal UvrC-binding domain of UvrB"/>
    <property type="match status" value="1"/>
</dbReference>
<dbReference type="SUPFAM" id="SSF82771">
    <property type="entry name" value="GIY-YIG endonuclease"/>
    <property type="match status" value="1"/>
</dbReference>
<dbReference type="SUPFAM" id="SSF47781">
    <property type="entry name" value="RuvA domain 2-like"/>
    <property type="match status" value="1"/>
</dbReference>
<dbReference type="PROSITE" id="PS50164">
    <property type="entry name" value="GIY_YIG"/>
    <property type="match status" value="1"/>
</dbReference>
<dbReference type="PROSITE" id="PS50151">
    <property type="entry name" value="UVR"/>
    <property type="match status" value="1"/>
</dbReference>
<dbReference type="PROSITE" id="PS50165">
    <property type="entry name" value="UVRC"/>
    <property type="match status" value="1"/>
</dbReference>
<feature type="chain" id="PRO_0000264982" description="UvrABC system protein C">
    <location>
        <begin position="1"/>
        <end position="585"/>
    </location>
</feature>
<feature type="domain" description="GIY-YIG" evidence="1">
    <location>
        <begin position="15"/>
        <end position="90"/>
    </location>
</feature>
<feature type="domain" description="UVR" evidence="1">
    <location>
        <begin position="198"/>
        <end position="233"/>
    </location>
</feature>
<keyword id="KW-0963">Cytoplasm</keyword>
<keyword id="KW-0227">DNA damage</keyword>
<keyword id="KW-0228">DNA excision</keyword>
<keyword id="KW-0234">DNA repair</keyword>
<keyword id="KW-0267">Excision nuclease</keyword>
<keyword id="KW-1185">Reference proteome</keyword>
<keyword id="KW-0742">SOS response</keyword>
<evidence type="ECO:0000255" key="1">
    <source>
        <dbReference type="HAMAP-Rule" id="MF_00203"/>
    </source>
</evidence>
<organism>
    <name type="scientific">Haloquadratum walsbyi (strain DSM 16790 / HBSQ001)</name>
    <dbReference type="NCBI Taxonomy" id="362976"/>
    <lineage>
        <taxon>Archaea</taxon>
        <taxon>Methanobacteriati</taxon>
        <taxon>Methanobacteriota</taxon>
        <taxon>Stenosarchaea group</taxon>
        <taxon>Halobacteria</taxon>
        <taxon>Halobacteriales</taxon>
        <taxon>Haloferacaceae</taxon>
        <taxon>Haloquadratum</taxon>
    </lineage>
</organism>
<comment type="function">
    <text evidence="1">The UvrABC repair system catalyzes the recognition and processing of DNA lesions. UvrC both incises the 5' and 3' sides of the lesion. The N-terminal half is responsible for the 3' incision and the C-terminal half is responsible for the 5' incision.</text>
</comment>
<comment type="subunit">
    <text evidence="1">Interacts with UvrB in an incision complex.</text>
</comment>
<comment type="subcellular location">
    <subcellularLocation>
        <location evidence="1">Cytoplasm</location>
    </subcellularLocation>
</comment>
<comment type="similarity">
    <text evidence="1">Belongs to the UvrC family.</text>
</comment>
<accession>Q18E52</accession>
<proteinExistence type="inferred from homology"/>
<reference key="1">
    <citation type="journal article" date="2006" name="BMC Genomics">
        <title>The genome of the square archaeon Haloquadratum walsbyi: life at the limits of water activity.</title>
        <authorList>
            <person name="Bolhuis H."/>
            <person name="Palm P."/>
            <person name="Wende A."/>
            <person name="Falb M."/>
            <person name="Rampp M."/>
            <person name="Rodriguez-Valera F."/>
            <person name="Pfeiffer F."/>
            <person name="Oesterhelt D."/>
        </authorList>
    </citation>
    <scope>NUCLEOTIDE SEQUENCE [LARGE SCALE GENOMIC DNA]</scope>
    <source>
        <strain>DSM 16790 / HBSQ001</strain>
    </source>
</reference>
<protein>
    <recommendedName>
        <fullName evidence="1">UvrABC system protein C</fullName>
        <shortName evidence="1">Protein UvrC</shortName>
    </recommendedName>
    <alternativeName>
        <fullName evidence="1">Excinuclease ABC subunit C</fullName>
    </alternativeName>
</protein>